<name>CNST_HUMAN</name>
<reference key="1">
    <citation type="journal article" date="2004" name="Nat. Genet.">
        <title>Complete sequencing and characterization of 21,243 full-length human cDNAs.</title>
        <authorList>
            <person name="Ota T."/>
            <person name="Suzuki Y."/>
            <person name="Nishikawa T."/>
            <person name="Otsuki T."/>
            <person name="Sugiyama T."/>
            <person name="Irie R."/>
            <person name="Wakamatsu A."/>
            <person name="Hayashi K."/>
            <person name="Sato H."/>
            <person name="Nagai K."/>
            <person name="Kimura K."/>
            <person name="Makita H."/>
            <person name="Sekine M."/>
            <person name="Obayashi M."/>
            <person name="Nishi T."/>
            <person name="Shibahara T."/>
            <person name="Tanaka T."/>
            <person name="Ishii S."/>
            <person name="Yamamoto J."/>
            <person name="Saito K."/>
            <person name="Kawai Y."/>
            <person name="Isono Y."/>
            <person name="Nakamura Y."/>
            <person name="Nagahari K."/>
            <person name="Murakami K."/>
            <person name="Yasuda T."/>
            <person name="Iwayanagi T."/>
            <person name="Wagatsuma M."/>
            <person name="Shiratori A."/>
            <person name="Sudo H."/>
            <person name="Hosoiri T."/>
            <person name="Kaku Y."/>
            <person name="Kodaira H."/>
            <person name="Kondo H."/>
            <person name="Sugawara M."/>
            <person name="Takahashi M."/>
            <person name="Kanda K."/>
            <person name="Yokoi T."/>
            <person name="Furuya T."/>
            <person name="Kikkawa E."/>
            <person name="Omura Y."/>
            <person name="Abe K."/>
            <person name="Kamihara K."/>
            <person name="Katsuta N."/>
            <person name="Sato K."/>
            <person name="Tanikawa M."/>
            <person name="Yamazaki M."/>
            <person name="Ninomiya K."/>
            <person name="Ishibashi T."/>
            <person name="Yamashita H."/>
            <person name="Murakawa K."/>
            <person name="Fujimori K."/>
            <person name="Tanai H."/>
            <person name="Kimata M."/>
            <person name="Watanabe M."/>
            <person name="Hiraoka S."/>
            <person name="Chiba Y."/>
            <person name="Ishida S."/>
            <person name="Ono Y."/>
            <person name="Takiguchi S."/>
            <person name="Watanabe S."/>
            <person name="Yosida M."/>
            <person name="Hotuta T."/>
            <person name="Kusano J."/>
            <person name="Kanehori K."/>
            <person name="Takahashi-Fujii A."/>
            <person name="Hara H."/>
            <person name="Tanase T.-O."/>
            <person name="Nomura Y."/>
            <person name="Togiya S."/>
            <person name="Komai F."/>
            <person name="Hara R."/>
            <person name="Takeuchi K."/>
            <person name="Arita M."/>
            <person name="Imose N."/>
            <person name="Musashino K."/>
            <person name="Yuuki H."/>
            <person name="Oshima A."/>
            <person name="Sasaki N."/>
            <person name="Aotsuka S."/>
            <person name="Yoshikawa Y."/>
            <person name="Matsunawa H."/>
            <person name="Ichihara T."/>
            <person name="Shiohata N."/>
            <person name="Sano S."/>
            <person name="Moriya S."/>
            <person name="Momiyama H."/>
            <person name="Satoh N."/>
            <person name="Takami S."/>
            <person name="Terashima Y."/>
            <person name="Suzuki O."/>
            <person name="Nakagawa S."/>
            <person name="Senoh A."/>
            <person name="Mizoguchi H."/>
            <person name="Goto Y."/>
            <person name="Shimizu F."/>
            <person name="Wakebe H."/>
            <person name="Hishigaki H."/>
            <person name="Watanabe T."/>
            <person name="Sugiyama A."/>
            <person name="Takemoto M."/>
            <person name="Kawakami B."/>
            <person name="Yamazaki M."/>
            <person name="Watanabe K."/>
            <person name="Kumagai A."/>
            <person name="Itakura S."/>
            <person name="Fukuzumi Y."/>
            <person name="Fujimori Y."/>
            <person name="Komiyama M."/>
            <person name="Tashiro H."/>
            <person name="Tanigami A."/>
            <person name="Fujiwara T."/>
            <person name="Ono T."/>
            <person name="Yamada K."/>
            <person name="Fujii Y."/>
            <person name="Ozaki K."/>
            <person name="Hirao M."/>
            <person name="Ohmori Y."/>
            <person name="Kawabata A."/>
            <person name="Hikiji T."/>
            <person name="Kobatake N."/>
            <person name="Inagaki H."/>
            <person name="Ikema Y."/>
            <person name="Okamoto S."/>
            <person name="Okitani R."/>
            <person name="Kawakami T."/>
            <person name="Noguchi S."/>
            <person name="Itoh T."/>
            <person name="Shigeta K."/>
            <person name="Senba T."/>
            <person name="Matsumura K."/>
            <person name="Nakajima Y."/>
            <person name="Mizuno T."/>
            <person name="Morinaga M."/>
            <person name="Sasaki M."/>
            <person name="Togashi T."/>
            <person name="Oyama M."/>
            <person name="Hata H."/>
            <person name="Watanabe M."/>
            <person name="Komatsu T."/>
            <person name="Mizushima-Sugano J."/>
            <person name="Satoh T."/>
            <person name="Shirai Y."/>
            <person name="Takahashi Y."/>
            <person name="Nakagawa K."/>
            <person name="Okumura K."/>
            <person name="Nagase T."/>
            <person name="Nomura N."/>
            <person name="Kikuchi H."/>
            <person name="Masuho Y."/>
            <person name="Yamashita R."/>
            <person name="Nakai K."/>
            <person name="Yada T."/>
            <person name="Nakamura Y."/>
            <person name="Ohara O."/>
            <person name="Isogai T."/>
            <person name="Sugano S."/>
        </authorList>
    </citation>
    <scope>NUCLEOTIDE SEQUENCE [LARGE SCALE MRNA] (ISOFORM 1)</scope>
    <scope>VARIANT SER-87</scope>
    <source>
        <tissue>Spleen</tissue>
        <tissue>Teratocarcinoma</tissue>
    </source>
</reference>
<reference key="2">
    <citation type="journal article" date="2007" name="BMC Genomics">
        <title>The full-ORF clone resource of the German cDNA consortium.</title>
        <authorList>
            <person name="Bechtel S."/>
            <person name="Rosenfelder H."/>
            <person name="Duda A."/>
            <person name="Schmidt C.P."/>
            <person name="Ernst U."/>
            <person name="Wellenreuther R."/>
            <person name="Mehrle A."/>
            <person name="Schuster C."/>
            <person name="Bahr A."/>
            <person name="Bloecker H."/>
            <person name="Heubner D."/>
            <person name="Hoerlein A."/>
            <person name="Michel G."/>
            <person name="Wedler H."/>
            <person name="Koehrer K."/>
            <person name="Ottenwaelder B."/>
            <person name="Poustka A."/>
            <person name="Wiemann S."/>
            <person name="Schupp I."/>
        </authorList>
    </citation>
    <scope>NUCLEOTIDE SEQUENCE [LARGE SCALE MRNA] (ISOFORM 1)</scope>
    <scope>VARIANT SER-87</scope>
    <source>
        <tissue>Skeletal muscle</tissue>
    </source>
</reference>
<reference key="3">
    <citation type="journal article" date="2006" name="Nature">
        <title>The DNA sequence and biological annotation of human chromosome 1.</title>
        <authorList>
            <person name="Gregory S.G."/>
            <person name="Barlow K.F."/>
            <person name="McLay K.E."/>
            <person name="Kaul R."/>
            <person name="Swarbreck D."/>
            <person name="Dunham A."/>
            <person name="Scott C.E."/>
            <person name="Howe K.L."/>
            <person name="Woodfine K."/>
            <person name="Spencer C.C.A."/>
            <person name="Jones M.C."/>
            <person name="Gillson C."/>
            <person name="Searle S."/>
            <person name="Zhou Y."/>
            <person name="Kokocinski F."/>
            <person name="McDonald L."/>
            <person name="Evans R."/>
            <person name="Phillips K."/>
            <person name="Atkinson A."/>
            <person name="Cooper R."/>
            <person name="Jones C."/>
            <person name="Hall R.E."/>
            <person name="Andrews T.D."/>
            <person name="Lloyd C."/>
            <person name="Ainscough R."/>
            <person name="Almeida J.P."/>
            <person name="Ambrose K.D."/>
            <person name="Anderson F."/>
            <person name="Andrew R.W."/>
            <person name="Ashwell R.I.S."/>
            <person name="Aubin K."/>
            <person name="Babbage A.K."/>
            <person name="Bagguley C.L."/>
            <person name="Bailey J."/>
            <person name="Beasley H."/>
            <person name="Bethel G."/>
            <person name="Bird C.P."/>
            <person name="Bray-Allen S."/>
            <person name="Brown J.Y."/>
            <person name="Brown A.J."/>
            <person name="Buckley D."/>
            <person name="Burton J."/>
            <person name="Bye J."/>
            <person name="Carder C."/>
            <person name="Chapman J.C."/>
            <person name="Clark S.Y."/>
            <person name="Clarke G."/>
            <person name="Clee C."/>
            <person name="Cobley V."/>
            <person name="Collier R.E."/>
            <person name="Corby N."/>
            <person name="Coville G.J."/>
            <person name="Davies J."/>
            <person name="Deadman R."/>
            <person name="Dunn M."/>
            <person name="Earthrowl M."/>
            <person name="Ellington A.G."/>
            <person name="Errington H."/>
            <person name="Frankish A."/>
            <person name="Frankland J."/>
            <person name="French L."/>
            <person name="Garner P."/>
            <person name="Garnett J."/>
            <person name="Gay L."/>
            <person name="Ghori M.R.J."/>
            <person name="Gibson R."/>
            <person name="Gilby L.M."/>
            <person name="Gillett W."/>
            <person name="Glithero R.J."/>
            <person name="Grafham D.V."/>
            <person name="Griffiths C."/>
            <person name="Griffiths-Jones S."/>
            <person name="Grocock R."/>
            <person name="Hammond S."/>
            <person name="Harrison E.S.I."/>
            <person name="Hart E."/>
            <person name="Haugen E."/>
            <person name="Heath P.D."/>
            <person name="Holmes S."/>
            <person name="Holt K."/>
            <person name="Howden P.J."/>
            <person name="Hunt A.R."/>
            <person name="Hunt S.E."/>
            <person name="Hunter G."/>
            <person name="Isherwood J."/>
            <person name="James R."/>
            <person name="Johnson C."/>
            <person name="Johnson D."/>
            <person name="Joy A."/>
            <person name="Kay M."/>
            <person name="Kershaw J.K."/>
            <person name="Kibukawa M."/>
            <person name="Kimberley A.M."/>
            <person name="King A."/>
            <person name="Knights A.J."/>
            <person name="Lad H."/>
            <person name="Laird G."/>
            <person name="Lawlor S."/>
            <person name="Leongamornlert D.A."/>
            <person name="Lloyd D.M."/>
            <person name="Loveland J."/>
            <person name="Lovell J."/>
            <person name="Lush M.J."/>
            <person name="Lyne R."/>
            <person name="Martin S."/>
            <person name="Mashreghi-Mohammadi M."/>
            <person name="Matthews L."/>
            <person name="Matthews N.S.W."/>
            <person name="McLaren S."/>
            <person name="Milne S."/>
            <person name="Mistry S."/>
            <person name="Moore M.J.F."/>
            <person name="Nickerson T."/>
            <person name="O'Dell C.N."/>
            <person name="Oliver K."/>
            <person name="Palmeiri A."/>
            <person name="Palmer S.A."/>
            <person name="Parker A."/>
            <person name="Patel D."/>
            <person name="Pearce A.V."/>
            <person name="Peck A.I."/>
            <person name="Pelan S."/>
            <person name="Phelps K."/>
            <person name="Phillimore B.J."/>
            <person name="Plumb R."/>
            <person name="Rajan J."/>
            <person name="Raymond C."/>
            <person name="Rouse G."/>
            <person name="Saenphimmachak C."/>
            <person name="Sehra H.K."/>
            <person name="Sheridan E."/>
            <person name="Shownkeen R."/>
            <person name="Sims S."/>
            <person name="Skuce C.D."/>
            <person name="Smith M."/>
            <person name="Steward C."/>
            <person name="Subramanian S."/>
            <person name="Sycamore N."/>
            <person name="Tracey A."/>
            <person name="Tromans A."/>
            <person name="Van Helmond Z."/>
            <person name="Wall M."/>
            <person name="Wallis J.M."/>
            <person name="White S."/>
            <person name="Whitehead S.L."/>
            <person name="Wilkinson J.E."/>
            <person name="Willey D.L."/>
            <person name="Williams H."/>
            <person name="Wilming L."/>
            <person name="Wray P.W."/>
            <person name="Wu Z."/>
            <person name="Coulson A."/>
            <person name="Vaudin M."/>
            <person name="Sulston J.E."/>
            <person name="Durbin R.M."/>
            <person name="Hubbard T."/>
            <person name="Wooster R."/>
            <person name="Dunham I."/>
            <person name="Carter N.P."/>
            <person name="McVean G."/>
            <person name="Ross M.T."/>
            <person name="Harrow J."/>
            <person name="Olson M.V."/>
            <person name="Beck S."/>
            <person name="Rogers J."/>
            <person name="Bentley D.R."/>
        </authorList>
    </citation>
    <scope>NUCLEOTIDE SEQUENCE [LARGE SCALE GENOMIC DNA]</scope>
</reference>
<reference key="4">
    <citation type="journal article" date="2004" name="Genome Res.">
        <title>The status, quality, and expansion of the NIH full-length cDNA project: the Mammalian Gene Collection (MGC).</title>
        <authorList>
            <consortium name="The MGC Project Team"/>
        </authorList>
    </citation>
    <scope>NUCLEOTIDE SEQUENCE [LARGE SCALE MRNA] (ISOFORMS 2 AND 3)</scope>
    <scope>VARIANT SER-87</scope>
    <source>
        <tissue>Brain</tissue>
        <tissue>Testis</tissue>
    </source>
</reference>
<reference key="5">
    <citation type="journal article" date="2010" name="Hum. Mol. Genet.">
        <title>Consortin, a trans-Golgi network cargo receptor for the plasma membrane targeting and recycling of connexins.</title>
        <authorList>
            <person name="del Castillo F.J."/>
            <person name="Cohen-Salmon M."/>
            <person name="Charollais A."/>
            <person name="Caille D."/>
            <person name="Lampe P.D."/>
            <person name="Chavrier P."/>
            <person name="Meda P."/>
            <person name="Petit C."/>
        </authorList>
    </citation>
    <scope>FUNCTION</scope>
    <scope>TOPOLOGY</scope>
    <scope>SUBCELLULAR LOCATION</scope>
</reference>
<reference key="6">
    <citation type="journal article" date="2014" name="J. Proteomics">
        <title>An enzyme assisted RP-RPLC approach for in-depth analysis of human liver phosphoproteome.</title>
        <authorList>
            <person name="Bian Y."/>
            <person name="Song C."/>
            <person name="Cheng K."/>
            <person name="Dong M."/>
            <person name="Wang F."/>
            <person name="Huang J."/>
            <person name="Sun D."/>
            <person name="Wang L."/>
            <person name="Ye M."/>
            <person name="Zou H."/>
        </authorList>
    </citation>
    <scope>IDENTIFICATION BY MASS SPECTROMETRY [LARGE SCALE ANALYSIS]</scope>
    <source>
        <tissue>Liver</tissue>
    </source>
</reference>
<comment type="function">
    <text evidence="7">Required for targeting of connexins to the plasma membrane.</text>
</comment>
<comment type="subunit">
    <text evidence="1">Interacts with connexins GJA1/CX43, GJB1/CX32, GJB2/CX26, GJB3/CX31, GJB6/CX30 and GJC1/CX45. Also interacts with GGA1 and GGA2. Does not interact with PANX1 (By similarity).</text>
</comment>
<comment type="interaction">
    <interactant intactId="EBI-750390">
        <id>Q6PJW8</id>
    </interactant>
    <interactant intactId="EBI-752420">
        <id>Q9NUX5</id>
        <label>POT1</label>
    </interactant>
    <organismsDiffer>false</organismsDiffer>
    <experiments>2</experiments>
</comment>
<comment type="interaction">
    <interactant intactId="EBI-750390">
        <id>Q6PJW8</id>
    </interactant>
    <interactant intactId="EBI-357253">
        <id>P62136</id>
        <label>PPP1CA</label>
    </interactant>
    <organismsDiffer>false</organismsDiffer>
    <experiments>5</experiments>
</comment>
<comment type="interaction">
    <interactant intactId="EBI-750390">
        <id>Q6PJW8</id>
    </interactant>
    <interactant intactId="EBI-1378139">
        <id>Q9HAT0</id>
        <label>ROPN1</label>
    </interactant>
    <organismsDiffer>false</organismsDiffer>
    <experiments>5</experiments>
</comment>
<comment type="interaction">
    <interactant intactId="EBI-25836090">
        <id>Q6PJW8-3</id>
    </interactant>
    <interactant intactId="EBI-10988864">
        <id>P46379-2</id>
        <label>BAG6</label>
    </interactant>
    <organismsDiffer>false</organismsDiffer>
    <experiments>3</experiments>
</comment>
<comment type="interaction">
    <interactant intactId="EBI-25836090">
        <id>Q6PJW8-3</id>
    </interactant>
    <interactant intactId="EBI-718729">
        <id>P55212</id>
        <label>CASP6</label>
    </interactant>
    <organismsDiffer>false</organismsDiffer>
    <experiments>3</experiments>
</comment>
<comment type="interaction">
    <interactant intactId="EBI-25836090">
        <id>Q6PJW8-3</id>
    </interactant>
    <interactant intactId="EBI-12593112">
        <id>O75190-2</id>
        <label>DNAJB6</label>
    </interactant>
    <organismsDiffer>false</organismsDiffer>
    <experiments>3</experiments>
</comment>
<comment type="interaction">
    <interactant intactId="EBI-25836090">
        <id>Q6PJW8-3</id>
    </interactant>
    <interactant intactId="EBI-747754">
        <id>P28799</id>
        <label>GRN</label>
    </interactant>
    <organismsDiffer>false</organismsDiffer>
    <experiments>3</experiments>
</comment>
<comment type="interaction">
    <interactant intactId="EBI-25836090">
        <id>Q6PJW8-3</id>
    </interactant>
    <interactant intactId="EBI-712096">
        <id>P30519</id>
        <label>HMOX2</label>
    </interactant>
    <organismsDiffer>false</organismsDiffer>
    <experiments>3</experiments>
</comment>
<comment type="interaction">
    <interactant intactId="EBI-25836090">
        <id>Q6PJW8-3</id>
    </interactant>
    <interactant intactId="EBI-352682">
        <id>P04792</id>
        <label>HSPB1</label>
    </interactant>
    <organismsDiffer>false</organismsDiffer>
    <experiments>3</experiments>
</comment>
<comment type="interaction">
    <interactant intactId="EBI-25836090">
        <id>Q6PJW8-3</id>
    </interactant>
    <interactant intactId="EBI-6398041">
        <id>Q9UMF0</id>
        <label>ICAM5</label>
    </interactant>
    <organismsDiffer>false</organismsDiffer>
    <experiments>3</experiments>
</comment>
<comment type="interaction">
    <interactant intactId="EBI-25836090">
        <id>Q6PJW8-3</id>
    </interactant>
    <interactant intactId="EBI-10975473">
        <id>O60333-2</id>
        <label>KIF1B</label>
    </interactant>
    <organismsDiffer>false</organismsDiffer>
    <experiments>3</experiments>
</comment>
<comment type="interaction">
    <interactant intactId="EBI-25836090">
        <id>Q6PJW8-3</id>
    </interactant>
    <interactant intactId="EBI-948266">
        <id>O14901</id>
        <label>KLF11</label>
    </interactant>
    <organismsDiffer>false</organismsDiffer>
    <experiments>3</experiments>
</comment>
<comment type="interaction">
    <interactant intactId="EBI-25836090">
        <id>Q6PJW8-3</id>
    </interactant>
    <interactant intactId="EBI-21591415">
        <id>P13473-2</id>
        <label>LAMP2</label>
    </interactant>
    <organismsDiffer>false</organismsDiffer>
    <experiments>3</experiments>
</comment>
<comment type="interaction">
    <interactant intactId="EBI-25836090">
        <id>Q6PJW8-3</id>
    </interactant>
    <interactant intactId="EBI-286642">
        <id>P62826</id>
        <label>RAN</label>
    </interactant>
    <organismsDiffer>false</organismsDiffer>
    <experiments>3</experiments>
</comment>
<comment type="interaction">
    <interactant intactId="EBI-25836090">
        <id>Q6PJW8-3</id>
    </interactant>
    <interactant intactId="EBI-396669">
        <id>Q9Y3C5</id>
        <label>RNF11</label>
    </interactant>
    <organismsDiffer>false</organismsDiffer>
    <experiments>3</experiments>
</comment>
<comment type="interaction">
    <interactant intactId="EBI-25836090">
        <id>Q6PJW8-3</id>
    </interactant>
    <interactant intactId="EBI-711909">
        <id>P02766</id>
        <label>TTR</label>
    </interactant>
    <organismsDiffer>false</organismsDiffer>
    <experiments>3</experiments>
</comment>
<comment type="interaction">
    <interactant intactId="EBI-25836090">
        <id>Q6PJW8-3</id>
    </interactant>
    <interactant intactId="EBI-720609">
        <id>O76024</id>
        <label>WFS1</label>
    </interactant>
    <organismsDiffer>false</organismsDiffer>
    <experiments>3</experiments>
</comment>
<comment type="subcellular location">
    <subcellularLocation>
        <location evidence="7">Cell membrane</location>
        <topology evidence="7">Single-pass membrane protein</topology>
    </subcellularLocation>
    <subcellularLocation>
        <location evidence="7">Golgi apparatus</location>
        <location evidence="7">trans-Golgi network membrane</location>
        <topology evidence="7">Single-pass membrane protein</topology>
    </subcellularLocation>
    <subcellularLocation>
        <location evidence="7">Cytoplasmic vesicle</location>
        <location evidence="7">Secretory vesicle</location>
    </subcellularLocation>
    <text>Located predominantly in the trans-Golgi network. Probably trafficks between the trans-Golgi network and the cell membrane via the secretory pathway.</text>
</comment>
<comment type="alternative products">
    <event type="alternative splicing"/>
    <isoform>
        <id>Q6PJW8-1</id>
        <name>1</name>
        <sequence type="displayed"/>
    </isoform>
    <isoform>
        <id>Q6PJW8-2</id>
        <name>2</name>
        <sequence type="described" ref="VSP_025819 VSP_025820"/>
    </isoform>
    <isoform>
        <id>Q6PJW8-3</id>
        <name>3</name>
        <sequence type="described" ref="VSP_025817 VSP_025818"/>
    </isoform>
</comment>
<comment type="similarity">
    <text evidence="9">Belongs to the CNST family.</text>
</comment>
<comment type="sequence caution" evidence="9">
    <conflict type="frameshift">
        <sequence resource="EMBL-CDS" id="BAB84968"/>
    </conflict>
</comment>
<comment type="sequence caution" evidence="9">
    <conflict type="frameshift">
        <sequence resource="EMBL-CDS" id="BAC03735"/>
    </conflict>
</comment>
<comment type="sequence caution" evidence="9">
    <conflict type="erroneous initiation">
        <sequence resource="EMBL-CDS" id="CAD38922"/>
    </conflict>
    <text>Extended N-terminus.</text>
</comment>
<keyword id="KW-0025">Alternative splicing</keyword>
<keyword id="KW-1003">Cell membrane</keyword>
<keyword id="KW-0968">Cytoplasmic vesicle</keyword>
<keyword id="KW-0333">Golgi apparatus</keyword>
<keyword id="KW-0472">Membrane</keyword>
<keyword id="KW-1267">Proteomics identification</keyword>
<keyword id="KW-1185">Reference proteome</keyword>
<keyword id="KW-0812">Transmembrane</keyword>
<keyword id="KW-1133">Transmembrane helix</keyword>
<protein>
    <recommendedName>
        <fullName>Consortin</fullName>
    </recommendedName>
</protein>
<accession>Q6PJW8</accession>
<accession>Q5VSY9</accession>
<accession>Q5VTM7</accession>
<accession>Q8IYA9</accession>
<accession>Q8N3L5</accession>
<accession>Q8NB09</accession>
<accession>Q8TEI2</accession>
<accession>Q96MR5</accession>
<sequence>MDDSDTPTYYLQIEPQDGCHPGDSVERSVTCLPSASDENENQLDGDGHEHLTSSDSAMGKPQVSEQDSLNNNESCTLSCEVAAGENLQNTLCEASRDEQAFLGKDKKIPGKRSPRSKKGTAKKIPPGLFSGDIAPLMQEKVLSAVTYAVDDEEAAEVNANEQPEAPKLVLQSLFSLIRGEVEQLDSRALPLCLHQIAESYFQEEDYEKAMKFIQLERLYHEQLLANLSAIQEQWETKWKTVQPHTVTALRNSEKGFNGEDFERLTKICATHQDPLLSKHKIAAVEKSQERKCSTQLLVSEDPKEGGATTKESESKTCLGTESSKESQHTVEPLGSSPCCHQMDVQTDSPSLSVTAGKDHMEELLCSAEATLALHTQSSETAGSPSGPDSSEDACEDDSRLQLAQTEACQDVARIEGIAEDPKVFLSSKSKTEPLISPGCDRIPPALISEGKYSQAQRKELRLPLRDASEALPTDQLENNELNELQQPDLTDSDGKSPQAQADSDGSENVLCGNNQISDLGILLPEVCMAPEEKGDKDDQLNKETEDYLNSLLEGCLKDTEDSLSYEDNQDDDSDLLQDLSPEEASYSLQENLPSDESCLSLDDLAKRIEIAEVVPTEGLVSILKKRNDTVGDHPAQMQHKPSKRRVRFQEIDDSLDQDEVGGGSCILLVLLCIATVFLSVGGTALYCTFGDMESPVCTDFADNMDFYYTKLLQGVAELKHWIYLS</sequence>
<proteinExistence type="evidence at protein level"/>
<dbReference type="EMBL" id="AK056563">
    <property type="protein sequence ID" value="BAB71218.1"/>
    <property type="molecule type" value="mRNA"/>
</dbReference>
<dbReference type="EMBL" id="AK074142">
    <property type="protein sequence ID" value="BAB84968.1"/>
    <property type="status" value="ALT_FRAME"/>
    <property type="molecule type" value="mRNA"/>
</dbReference>
<dbReference type="EMBL" id="AK091739">
    <property type="protein sequence ID" value="BAC03735.1"/>
    <property type="status" value="ALT_FRAME"/>
    <property type="molecule type" value="mRNA"/>
</dbReference>
<dbReference type="EMBL" id="AL834246">
    <property type="protein sequence ID" value="CAD38922.2"/>
    <property type="status" value="ALT_INIT"/>
    <property type="molecule type" value="mRNA"/>
</dbReference>
<dbReference type="EMBL" id="AL591623">
    <property type="status" value="NOT_ANNOTATED_CDS"/>
    <property type="molecule type" value="Genomic_DNA"/>
</dbReference>
<dbReference type="EMBL" id="AL646019">
    <property type="status" value="NOT_ANNOTATED_CDS"/>
    <property type="molecule type" value="Genomic_DNA"/>
</dbReference>
<dbReference type="EMBL" id="BC010228">
    <property type="protein sequence ID" value="AAH10228.1"/>
    <property type="molecule type" value="mRNA"/>
</dbReference>
<dbReference type="EMBL" id="BC036200">
    <property type="protein sequence ID" value="AAH36200.1"/>
    <property type="molecule type" value="mRNA"/>
</dbReference>
<dbReference type="CCDS" id="CCDS1628.1">
    <molecule id="Q6PJW8-1"/>
</dbReference>
<dbReference type="CCDS" id="CCDS44343.1">
    <molecule id="Q6PJW8-2"/>
</dbReference>
<dbReference type="RefSeq" id="NP_001132931.1">
    <molecule id="Q6PJW8-2"/>
    <property type="nucleotide sequence ID" value="NM_001139459.2"/>
</dbReference>
<dbReference type="RefSeq" id="NP_689822.2">
    <molecule id="Q6PJW8-1"/>
    <property type="nucleotide sequence ID" value="NM_152609.3"/>
</dbReference>
<dbReference type="RefSeq" id="XP_005273138.2">
    <property type="nucleotide sequence ID" value="XM_005273081.3"/>
</dbReference>
<dbReference type="RefSeq" id="XP_011542412.1">
    <molecule id="Q6PJW8-1"/>
    <property type="nucleotide sequence ID" value="XM_011544110.4"/>
</dbReference>
<dbReference type="RefSeq" id="XP_011542413.1">
    <molecule id="Q6PJW8-1"/>
    <property type="nucleotide sequence ID" value="XM_011544111.2"/>
</dbReference>
<dbReference type="RefSeq" id="XP_047303859.1">
    <molecule id="Q6PJW8-1"/>
    <property type="nucleotide sequence ID" value="XM_047447903.1"/>
</dbReference>
<dbReference type="SMR" id="Q6PJW8"/>
<dbReference type="BioGRID" id="127882">
    <property type="interactions" value="31"/>
</dbReference>
<dbReference type="ELM" id="Q6PJW8"/>
<dbReference type="FunCoup" id="Q6PJW8">
    <property type="interactions" value="861"/>
</dbReference>
<dbReference type="IntAct" id="Q6PJW8">
    <property type="interactions" value="27"/>
</dbReference>
<dbReference type="STRING" id="9606.ENSP00000355470"/>
<dbReference type="iPTMnet" id="Q6PJW8"/>
<dbReference type="PhosphoSitePlus" id="Q6PJW8"/>
<dbReference type="SwissPalm" id="Q6PJW8"/>
<dbReference type="BioMuta" id="CNST"/>
<dbReference type="DMDM" id="317373449"/>
<dbReference type="jPOST" id="Q6PJW8"/>
<dbReference type="MassIVE" id="Q6PJW8"/>
<dbReference type="PaxDb" id="9606-ENSP00000355470"/>
<dbReference type="PeptideAtlas" id="Q6PJW8"/>
<dbReference type="ProteomicsDB" id="67225">
    <molecule id="Q6PJW8-1"/>
</dbReference>
<dbReference type="ProteomicsDB" id="67226">
    <molecule id="Q6PJW8-2"/>
</dbReference>
<dbReference type="ProteomicsDB" id="67227">
    <molecule id="Q6PJW8-3"/>
</dbReference>
<dbReference type="Pumba" id="Q6PJW8"/>
<dbReference type="Antibodypedia" id="2026">
    <property type="antibodies" value="21 antibodies from 10 providers"/>
</dbReference>
<dbReference type="DNASU" id="163882"/>
<dbReference type="Ensembl" id="ENST00000366512.7">
    <molecule id="Q6PJW8-2"/>
    <property type="protein sequence ID" value="ENSP00000355469.3"/>
    <property type="gene ID" value="ENSG00000162852.14"/>
</dbReference>
<dbReference type="Ensembl" id="ENST00000366513.9">
    <molecule id="Q6PJW8-1"/>
    <property type="protein sequence ID" value="ENSP00000355470.4"/>
    <property type="gene ID" value="ENSG00000162852.14"/>
</dbReference>
<dbReference type="GeneID" id="163882"/>
<dbReference type="KEGG" id="hsa:163882"/>
<dbReference type="MANE-Select" id="ENST00000366513.9">
    <property type="protein sequence ID" value="ENSP00000355470.4"/>
    <property type="RefSeq nucleotide sequence ID" value="NM_152609.3"/>
    <property type="RefSeq protein sequence ID" value="NP_689822.2"/>
</dbReference>
<dbReference type="UCSC" id="uc001ibo.5">
    <molecule id="Q6PJW8-1"/>
    <property type="organism name" value="human"/>
</dbReference>
<dbReference type="AGR" id="HGNC:26486"/>
<dbReference type="CTD" id="163882"/>
<dbReference type="DisGeNET" id="163882"/>
<dbReference type="GeneCards" id="CNST"/>
<dbReference type="HGNC" id="HGNC:26486">
    <property type="gene designation" value="CNST"/>
</dbReference>
<dbReference type="HPA" id="ENSG00000162852">
    <property type="expression patterns" value="Low tissue specificity"/>
</dbReference>
<dbReference type="MIM" id="613439">
    <property type="type" value="gene"/>
</dbReference>
<dbReference type="neXtProt" id="NX_Q6PJW8"/>
<dbReference type="OpenTargets" id="ENSG00000162852"/>
<dbReference type="PharmGKB" id="PA165751017"/>
<dbReference type="VEuPathDB" id="HostDB:ENSG00000162852"/>
<dbReference type="eggNOG" id="ENOG502QSMS">
    <property type="taxonomic scope" value="Eukaryota"/>
</dbReference>
<dbReference type="GeneTree" id="ENSGT00390000005861"/>
<dbReference type="HOGENOM" id="CLU_023107_0_0_1"/>
<dbReference type="InParanoid" id="Q6PJW8"/>
<dbReference type="OMA" id="AKFCTTH"/>
<dbReference type="OrthoDB" id="9894200at2759"/>
<dbReference type="PAN-GO" id="Q6PJW8">
    <property type="GO annotations" value="5 GO annotations based on evolutionary models"/>
</dbReference>
<dbReference type="PhylomeDB" id="Q6PJW8"/>
<dbReference type="TreeFam" id="TF351172"/>
<dbReference type="PathwayCommons" id="Q6PJW8"/>
<dbReference type="SignaLink" id="Q6PJW8"/>
<dbReference type="BioGRID-ORCS" id="163882">
    <property type="hits" value="14 hits in 1153 CRISPR screens"/>
</dbReference>
<dbReference type="ChiTaRS" id="CNST">
    <property type="organism name" value="human"/>
</dbReference>
<dbReference type="GeneWiki" id="C1orf71"/>
<dbReference type="GenomeRNAi" id="163882"/>
<dbReference type="Pharos" id="Q6PJW8">
    <property type="development level" value="Tdark"/>
</dbReference>
<dbReference type="PRO" id="PR:Q6PJW8"/>
<dbReference type="Proteomes" id="UP000005640">
    <property type="component" value="Chromosome 1"/>
</dbReference>
<dbReference type="RNAct" id="Q6PJW8">
    <property type="molecule type" value="protein"/>
</dbReference>
<dbReference type="Bgee" id="ENSG00000162852">
    <property type="expression patterns" value="Expressed in middle temporal gyrus and 186 other cell types or tissues"/>
</dbReference>
<dbReference type="ExpressionAtlas" id="Q6PJW8">
    <property type="expression patterns" value="baseline and differential"/>
</dbReference>
<dbReference type="GO" id="GO:0043231">
    <property type="term" value="C:intracellular membrane-bounded organelle"/>
    <property type="evidence" value="ECO:0000314"/>
    <property type="project" value="HPA"/>
</dbReference>
<dbReference type="GO" id="GO:0016020">
    <property type="term" value="C:membrane"/>
    <property type="evidence" value="ECO:0007005"/>
    <property type="project" value="UniProtKB"/>
</dbReference>
<dbReference type="GO" id="GO:0005886">
    <property type="term" value="C:plasma membrane"/>
    <property type="evidence" value="ECO:0000314"/>
    <property type="project" value="UniProtKB"/>
</dbReference>
<dbReference type="GO" id="GO:0032991">
    <property type="term" value="C:protein-containing complex"/>
    <property type="evidence" value="ECO:0000314"/>
    <property type="project" value="LIFEdb"/>
</dbReference>
<dbReference type="GO" id="GO:0005802">
    <property type="term" value="C:trans-Golgi network"/>
    <property type="evidence" value="ECO:0000314"/>
    <property type="project" value="UniProtKB"/>
</dbReference>
<dbReference type="GO" id="GO:0030133">
    <property type="term" value="C:transport vesicle"/>
    <property type="evidence" value="ECO:0000314"/>
    <property type="project" value="UniProtKB"/>
</dbReference>
<dbReference type="GO" id="GO:0071253">
    <property type="term" value="F:connexin binding"/>
    <property type="evidence" value="ECO:0000250"/>
    <property type="project" value="UniProtKB"/>
</dbReference>
<dbReference type="GO" id="GO:0019902">
    <property type="term" value="F:phosphatase binding"/>
    <property type="evidence" value="ECO:0000314"/>
    <property type="project" value="UniProtKB"/>
</dbReference>
<dbReference type="GO" id="GO:0042998">
    <property type="term" value="P:positive regulation of Golgi to plasma membrane protein transport"/>
    <property type="evidence" value="ECO:0000315"/>
    <property type="project" value="UniProtKB"/>
</dbReference>
<dbReference type="InterPro" id="IPR042318">
    <property type="entry name" value="Consortin"/>
</dbReference>
<dbReference type="InterPro" id="IPR028129">
    <property type="entry name" value="Consortin_C"/>
</dbReference>
<dbReference type="InterPro" id="IPR054132">
    <property type="entry name" value="Consortin_N"/>
</dbReference>
<dbReference type="PANTHER" id="PTHR28581">
    <property type="entry name" value="CONSORTIN"/>
    <property type="match status" value="1"/>
</dbReference>
<dbReference type="PANTHER" id="PTHR28581:SF1">
    <property type="entry name" value="CONSORTIN"/>
    <property type="match status" value="1"/>
</dbReference>
<dbReference type="Pfam" id="PF15281">
    <property type="entry name" value="Consortin_C"/>
    <property type="match status" value="1"/>
</dbReference>
<dbReference type="Pfam" id="PF22883">
    <property type="entry name" value="Consortin_N"/>
    <property type="match status" value="1"/>
</dbReference>
<organism>
    <name type="scientific">Homo sapiens</name>
    <name type="common">Human</name>
    <dbReference type="NCBI Taxonomy" id="9606"/>
    <lineage>
        <taxon>Eukaryota</taxon>
        <taxon>Metazoa</taxon>
        <taxon>Chordata</taxon>
        <taxon>Craniata</taxon>
        <taxon>Vertebrata</taxon>
        <taxon>Euteleostomi</taxon>
        <taxon>Mammalia</taxon>
        <taxon>Eutheria</taxon>
        <taxon>Euarchontoglires</taxon>
        <taxon>Primates</taxon>
        <taxon>Haplorrhini</taxon>
        <taxon>Catarrhini</taxon>
        <taxon>Hominidae</taxon>
        <taxon>Homo</taxon>
    </lineage>
</organism>
<gene>
    <name type="primary">CNST</name>
    <name type="synonym">C1orf71</name>
</gene>
<feature type="chain" id="PRO_0000288906" description="Consortin">
    <location>
        <begin position="1"/>
        <end position="725"/>
    </location>
</feature>
<feature type="topological domain" description="Cytoplasmic" evidence="2">
    <location>
        <begin position="1"/>
        <end position="664"/>
    </location>
</feature>
<feature type="transmembrane region" description="Helical" evidence="2">
    <location>
        <begin position="665"/>
        <end position="685"/>
    </location>
</feature>
<feature type="topological domain" description="Extracellular" evidence="2">
    <location>
        <begin position="686"/>
        <end position="725"/>
    </location>
</feature>
<feature type="region of interest" description="Disordered" evidence="3">
    <location>
        <begin position="1"/>
        <end position="72"/>
    </location>
</feature>
<feature type="region of interest" description="Disordered" evidence="3">
    <location>
        <begin position="103"/>
        <end position="124"/>
    </location>
</feature>
<feature type="region of interest" description="Disordered" evidence="3">
    <location>
        <begin position="296"/>
        <end position="353"/>
    </location>
</feature>
<feature type="region of interest" description="Disordered" evidence="3">
    <location>
        <begin position="375"/>
        <end position="397"/>
    </location>
</feature>
<feature type="region of interest" description="Disordered" evidence="3">
    <location>
        <begin position="485"/>
        <end position="510"/>
    </location>
</feature>
<feature type="compositionally biased region" description="Polar residues" evidence="3">
    <location>
        <begin position="63"/>
        <end position="72"/>
    </location>
</feature>
<feature type="compositionally biased region" description="Basic residues" evidence="3">
    <location>
        <begin position="109"/>
        <end position="121"/>
    </location>
</feature>
<feature type="compositionally biased region" description="Basic and acidic residues" evidence="3">
    <location>
        <begin position="300"/>
        <end position="314"/>
    </location>
</feature>
<feature type="compositionally biased region" description="Polar residues" evidence="3">
    <location>
        <begin position="343"/>
        <end position="353"/>
    </location>
</feature>
<feature type="compositionally biased region" description="Polar residues" evidence="3">
    <location>
        <begin position="375"/>
        <end position="388"/>
    </location>
</feature>
<feature type="splice variant" id="VSP_025817" description="In isoform 3." evidence="8">
    <original>ETKWKTVQPHTVTALRNSEKGFNGEDFER</original>
    <variation>GKYRPTWNVELAVIQQVTIYKINIFDLVL</variation>
    <location>
        <begin position="235"/>
        <end position="263"/>
    </location>
</feature>
<feature type="splice variant" id="VSP_025818" description="In isoform 3." evidence="8">
    <location>
        <begin position="264"/>
        <end position="725"/>
    </location>
</feature>
<feature type="splice variant" id="VSP_025819" description="In isoform 2." evidence="8">
    <original>VPT</original>
    <variation>NQR</variation>
    <location>
        <begin position="614"/>
        <end position="616"/>
    </location>
</feature>
<feature type="splice variant" id="VSP_025820" description="In isoform 2." evidence="8">
    <location>
        <begin position="617"/>
        <end position="725"/>
    </location>
</feature>
<feature type="sequence variant" id="VAR_032530" description="In dbSNP:rs35286882.">
    <original>S</original>
    <variation>N</variation>
    <location>
        <position position="28"/>
    </location>
</feature>
<feature type="sequence variant" id="VAR_032531" description="In dbSNP:rs6702823." evidence="4 5 6">
    <original>L</original>
    <variation>S</variation>
    <location>
        <position position="87"/>
    </location>
</feature>
<feature type="sequence variant" id="VAR_056762" description="In dbSNP:rs12091148.">
    <original>Q</original>
    <variation>R</variation>
    <location>
        <position position="183"/>
    </location>
</feature>
<feature type="sequence variant" id="VAR_032532" description="In dbSNP:rs12075111.">
    <original>R</original>
    <variation>C</variation>
    <location>
        <position position="399"/>
    </location>
</feature>
<feature type="sequence conflict" description="In Ref. 1; BAB84968." evidence="9" ref="1">
    <original>V</original>
    <variation>L</variation>
    <location>
        <position position="246"/>
    </location>
</feature>
<feature type="sequence conflict" description="In Ref. 2; CAD38922." evidence="9" ref="2">
    <original>E</original>
    <variation>Q</variation>
    <location>
        <position position="331"/>
    </location>
</feature>
<feature type="sequence conflict" description="In Ref. 2; CAD38922." evidence="9" ref="2">
    <original>AC</original>
    <variation>GR</variation>
    <location>
        <begin position="393"/>
        <end position="394"/>
    </location>
</feature>
<feature type="sequence conflict" description="In Ref. 1; BAC03735." evidence="9" ref="1">
    <original>F</original>
    <variation>L</variation>
    <location>
        <position position="689"/>
    </location>
</feature>
<evidence type="ECO:0000250" key="1"/>
<evidence type="ECO:0000255" key="2"/>
<evidence type="ECO:0000256" key="3">
    <source>
        <dbReference type="SAM" id="MobiDB-lite"/>
    </source>
</evidence>
<evidence type="ECO:0000269" key="4">
    <source>
    </source>
</evidence>
<evidence type="ECO:0000269" key="5">
    <source>
    </source>
</evidence>
<evidence type="ECO:0000269" key="6">
    <source>
    </source>
</evidence>
<evidence type="ECO:0000269" key="7">
    <source>
    </source>
</evidence>
<evidence type="ECO:0000303" key="8">
    <source>
    </source>
</evidence>
<evidence type="ECO:0000305" key="9"/>